<accession>Q8Y930</accession>
<name>FLIE_LISMO</name>
<protein>
    <recommendedName>
        <fullName evidence="1">Flagellar hook-basal body complex protein FliE</fullName>
    </recommendedName>
</protein>
<feature type="chain" id="PRO_0000105552" description="Flagellar hook-basal body complex protein FliE">
    <location>
        <begin position="1"/>
        <end position="98"/>
    </location>
</feature>
<sequence length="98" mass="10355">MAIESINAASVLPKVTLGETAKTDNAAGAGNTFTQMLDSMSDTQSNAQTSVSNLLTTGEGNASDVLIQMKKAESEMKTAAVIRDNVIESYKQLLNMQV</sequence>
<organism>
    <name type="scientific">Listeria monocytogenes serovar 1/2a (strain ATCC BAA-679 / EGD-e)</name>
    <dbReference type="NCBI Taxonomy" id="169963"/>
    <lineage>
        <taxon>Bacteria</taxon>
        <taxon>Bacillati</taxon>
        <taxon>Bacillota</taxon>
        <taxon>Bacilli</taxon>
        <taxon>Bacillales</taxon>
        <taxon>Listeriaceae</taxon>
        <taxon>Listeria</taxon>
    </lineage>
</organism>
<proteinExistence type="inferred from homology"/>
<reference key="1">
    <citation type="journal article" date="2001" name="Science">
        <title>Comparative genomics of Listeria species.</title>
        <authorList>
            <person name="Glaser P."/>
            <person name="Frangeul L."/>
            <person name="Buchrieser C."/>
            <person name="Rusniok C."/>
            <person name="Amend A."/>
            <person name="Baquero F."/>
            <person name="Berche P."/>
            <person name="Bloecker H."/>
            <person name="Brandt P."/>
            <person name="Chakraborty T."/>
            <person name="Charbit A."/>
            <person name="Chetouani F."/>
            <person name="Couve E."/>
            <person name="de Daruvar A."/>
            <person name="Dehoux P."/>
            <person name="Domann E."/>
            <person name="Dominguez-Bernal G."/>
            <person name="Duchaud E."/>
            <person name="Durant L."/>
            <person name="Dussurget O."/>
            <person name="Entian K.-D."/>
            <person name="Fsihi H."/>
            <person name="Garcia-del Portillo F."/>
            <person name="Garrido P."/>
            <person name="Gautier L."/>
            <person name="Goebel W."/>
            <person name="Gomez-Lopez N."/>
            <person name="Hain T."/>
            <person name="Hauf J."/>
            <person name="Jackson D."/>
            <person name="Jones L.-M."/>
            <person name="Kaerst U."/>
            <person name="Kreft J."/>
            <person name="Kuhn M."/>
            <person name="Kunst F."/>
            <person name="Kurapkat G."/>
            <person name="Madueno E."/>
            <person name="Maitournam A."/>
            <person name="Mata Vicente J."/>
            <person name="Ng E."/>
            <person name="Nedjari H."/>
            <person name="Nordsiek G."/>
            <person name="Novella S."/>
            <person name="de Pablos B."/>
            <person name="Perez-Diaz J.-C."/>
            <person name="Purcell R."/>
            <person name="Remmel B."/>
            <person name="Rose M."/>
            <person name="Schlueter T."/>
            <person name="Simoes N."/>
            <person name="Tierrez A."/>
            <person name="Vazquez-Boland J.-A."/>
            <person name="Voss H."/>
            <person name="Wehland J."/>
            <person name="Cossart P."/>
        </authorList>
    </citation>
    <scope>NUCLEOTIDE SEQUENCE [LARGE SCALE GENOMIC DNA]</scope>
    <source>
        <strain>ATCC BAA-679 / EGD-e</strain>
    </source>
</reference>
<dbReference type="EMBL" id="AL591976">
    <property type="protein sequence ID" value="CAC98790.1"/>
    <property type="molecule type" value="Genomic_DNA"/>
</dbReference>
<dbReference type="PIR" id="AH1163">
    <property type="entry name" value="AH1163"/>
</dbReference>
<dbReference type="RefSeq" id="NP_464239.1">
    <property type="nucleotide sequence ID" value="NC_003210.1"/>
</dbReference>
<dbReference type="RefSeq" id="WP_003721833.1">
    <property type="nucleotide sequence ID" value="NZ_CP149495.1"/>
</dbReference>
<dbReference type="SMR" id="Q8Y930"/>
<dbReference type="STRING" id="169963.gene:17593363"/>
<dbReference type="PaxDb" id="169963-lmo0712"/>
<dbReference type="EnsemblBacteria" id="CAC98790">
    <property type="protein sequence ID" value="CAC98790"/>
    <property type="gene ID" value="CAC98790"/>
</dbReference>
<dbReference type="GeneID" id="985062"/>
<dbReference type="KEGG" id="lmo:lmo0712"/>
<dbReference type="PATRIC" id="fig|169963.11.peg.733"/>
<dbReference type="eggNOG" id="COG1677">
    <property type="taxonomic scope" value="Bacteria"/>
</dbReference>
<dbReference type="HOGENOM" id="CLU_184999_0_0_9"/>
<dbReference type="OrthoDB" id="2877539at2"/>
<dbReference type="BioCyc" id="LMON169963:LMO0712-MONOMER"/>
<dbReference type="Proteomes" id="UP000000817">
    <property type="component" value="Chromosome"/>
</dbReference>
<dbReference type="GO" id="GO:0009425">
    <property type="term" value="C:bacterial-type flagellum basal body"/>
    <property type="evidence" value="ECO:0007669"/>
    <property type="project" value="UniProtKB-SubCell"/>
</dbReference>
<dbReference type="GO" id="GO:0003774">
    <property type="term" value="F:cytoskeletal motor activity"/>
    <property type="evidence" value="ECO:0007669"/>
    <property type="project" value="InterPro"/>
</dbReference>
<dbReference type="GO" id="GO:0005198">
    <property type="term" value="F:structural molecule activity"/>
    <property type="evidence" value="ECO:0007669"/>
    <property type="project" value="InterPro"/>
</dbReference>
<dbReference type="GO" id="GO:0044780">
    <property type="term" value="P:bacterial-type flagellum assembly"/>
    <property type="evidence" value="ECO:0000318"/>
    <property type="project" value="GO_Central"/>
</dbReference>
<dbReference type="GO" id="GO:0071973">
    <property type="term" value="P:bacterial-type flagellum-dependent cell motility"/>
    <property type="evidence" value="ECO:0007669"/>
    <property type="project" value="InterPro"/>
</dbReference>
<dbReference type="HAMAP" id="MF_00724">
    <property type="entry name" value="FliE"/>
    <property type="match status" value="1"/>
</dbReference>
<dbReference type="InterPro" id="IPR001624">
    <property type="entry name" value="FliE"/>
</dbReference>
<dbReference type="NCBIfam" id="NF002466">
    <property type="entry name" value="PRK01699.1"/>
    <property type="match status" value="1"/>
</dbReference>
<dbReference type="PANTHER" id="PTHR34653">
    <property type="match status" value="1"/>
</dbReference>
<dbReference type="PANTHER" id="PTHR34653:SF1">
    <property type="entry name" value="FLAGELLAR HOOK-BASAL BODY COMPLEX PROTEIN FLIE"/>
    <property type="match status" value="1"/>
</dbReference>
<dbReference type="Pfam" id="PF02049">
    <property type="entry name" value="FliE"/>
    <property type="match status" value="1"/>
</dbReference>
<dbReference type="PRINTS" id="PR01006">
    <property type="entry name" value="FLGHOOKFLIE"/>
</dbReference>
<gene>
    <name evidence="1" type="primary">fliE</name>
    <name type="ordered locus">lmo0712</name>
</gene>
<keyword id="KW-0975">Bacterial flagellum</keyword>
<keyword id="KW-1185">Reference proteome</keyword>
<evidence type="ECO:0000255" key="1">
    <source>
        <dbReference type="HAMAP-Rule" id="MF_00724"/>
    </source>
</evidence>
<comment type="subcellular location">
    <subcellularLocation>
        <location evidence="1">Bacterial flagellum basal body</location>
    </subcellularLocation>
</comment>
<comment type="similarity">
    <text evidence="1">Belongs to the FliE family.</text>
</comment>